<feature type="chain" id="PRO_1000066375" description="Carbamoyl phosphate synthase large chain">
    <location>
        <begin position="1"/>
        <end position="1057"/>
    </location>
</feature>
<feature type="domain" description="ATP-grasp 1" evidence="1">
    <location>
        <begin position="133"/>
        <end position="327"/>
    </location>
</feature>
<feature type="domain" description="ATP-grasp 2" evidence="1">
    <location>
        <begin position="671"/>
        <end position="861"/>
    </location>
</feature>
<feature type="domain" description="MGS-like" evidence="1">
    <location>
        <begin position="930"/>
        <end position="1057"/>
    </location>
</feature>
<feature type="region of interest" description="Carboxyphosphate synthetic domain" evidence="1">
    <location>
        <begin position="1"/>
        <end position="401"/>
    </location>
</feature>
<feature type="region of interest" description="Oligomerization domain" evidence="1">
    <location>
        <begin position="402"/>
        <end position="546"/>
    </location>
</feature>
<feature type="region of interest" description="Carbamoyl phosphate synthetic domain" evidence="1">
    <location>
        <begin position="547"/>
        <end position="929"/>
    </location>
</feature>
<feature type="region of interest" description="Allosteric domain" evidence="1">
    <location>
        <begin position="930"/>
        <end position="1057"/>
    </location>
</feature>
<feature type="binding site" evidence="1">
    <location>
        <position position="129"/>
    </location>
    <ligand>
        <name>ATP</name>
        <dbReference type="ChEBI" id="CHEBI:30616"/>
        <label>1</label>
    </ligand>
</feature>
<feature type="binding site" evidence="1">
    <location>
        <position position="169"/>
    </location>
    <ligand>
        <name>ATP</name>
        <dbReference type="ChEBI" id="CHEBI:30616"/>
        <label>1</label>
    </ligand>
</feature>
<feature type="binding site" evidence="1">
    <location>
        <position position="175"/>
    </location>
    <ligand>
        <name>ATP</name>
        <dbReference type="ChEBI" id="CHEBI:30616"/>
        <label>1</label>
    </ligand>
</feature>
<feature type="binding site" evidence="1">
    <location>
        <position position="176"/>
    </location>
    <ligand>
        <name>ATP</name>
        <dbReference type="ChEBI" id="CHEBI:30616"/>
        <label>1</label>
    </ligand>
</feature>
<feature type="binding site" evidence="1">
    <location>
        <position position="208"/>
    </location>
    <ligand>
        <name>ATP</name>
        <dbReference type="ChEBI" id="CHEBI:30616"/>
        <label>1</label>
    </ligand>
</feature>
<feature type="binding site" evidence="1">
    <location>
        <position position="210"/>
    </location>
    <ligand>
        <name>ATP</name>
        <dbReference type="ChEBI" id="CHEBI:30616"/>
        <label>1</label>
    </ligand>
</feature>
<feature type="binding site" evidence="1">
    <location>
        <position position="215"/>
    </location>
    <ligand>
        <name>ATP</name>
        <dbReference type="ChEBI" id="CHEBI:30616"/>
        <label>1</label>
    </ligand>
</feature>
<feature type="binding site" evidence="1">
    <location>
        <position position="241"/>
    </location>
    <ligand>
        <name>ATP</name>
        <dbReference type="ChEBI" id="CHEBI:30616"/>
        <label>1</label>
    </ligand>
</feature>
<feature type="binding site" evidence="1">
    <location>
        <position position="242"/>
    </location>
    <ligand>
        <name>ATP</name>
        <dbReference type="ChEBI" id="CHEBI:30616"/>
        <label>1</label>
    </ligand>
</feature>
<feature type="binding site" evidence="1">
    <location>
        <position position="243"/>
    </location>
    <ligand>
        <name>ATP</name>
        <dbReference type="ChEBI" id="CHEBI:30616"/>
        <label>1</label>
    </ligand>
</feature>
<feature type="binding site" evidence="1">
    <location>
        <position position="284"/>
    </location>
    <ligand>
        <name>ATP</name>
        <dbReference type="ChEBI" id="CHEBI:30616"/>
        <label>1</label>
    </ligand>
</feature>
<feature type="binding site" evidence="1">
    <location>
        <position position="284"/>
    </location>
    <ligand>
        <name>Mg(2+)</name>
        <dbReference type="ChEBI" id="CHEBI:18420"/>
        <label>1</label>
    </ligand>
</feature>
<feature type="binding site" evidence="1">
    <location>
        <position position="284"/>
    </location>
    <ligand>
        <name>Mn(2+)</name>
        <dbReference type="ChEBI" id="CHEBI:29035"/>
        <label>1</label>
    </ligand>
</feature>
<feature type="binding site" evidence="1">
    <location>
        <position position="298"/>
    </location>
    <ligand>
        <name>ATP</name>
        <dbReference type="ChEBI" id="CHEBI:30616"/>
        <label>1</label>
    </ligand>
</feature>
<feature type="binding site" evidence="1">
    <location>
        <position position="298"/>
    </location>
    <ligand>
        <name>Mg(2+)</name>
        <dbReference type="ChEBI" id="CHEBI:18420"/>
        <label>1</label>
    </ligand>
</feature>
<feature type="binding site" evidence="1">
    <location>
        <position position="298"/>
    </location>
    <ligand>
        <name>Mg(2+)</name>
        <dbReference type="ChEBI" id="CHEBI:18420"/>
        <label>2</label>
    </ligand>
</feature>
<feature type="binding site" evidence="1">
    <location>
        <position position="298"/>
    </location>
    <ligand>
        <name>Mn(2+)</name>
        <dbReference type="ChEBI" id="CHEBI:29035"/>
        <label>1</label>
    </ligand>
</feature>
<feature type="binding site" evidence="1">
    <location>
        <position position="298"/>
    </location>
    <ligand>
        <name>Mn(2+)</name>
        <dbReference type="ChEBI" id="CHEBI:29035"/>
        <label>2</label>
    </ligand>
</feature>
<feature type="binding site" evidence="1">
    <location>
        <position position="300"/>
    </location>
    <ligand>
        <name>Mg(2+)</name>
        <dbReference type="ChEBI" id="CHEBI:18420"/>
        <label>2</label>
    </ligand>
</feature>
<feature type="binding site" evidence="1">
    <location>
        <position position="300"/>
    </location>
    <ligand>
        <name>Mn(2+)</name>
        <dbReference type="ChEBI" id="CHEBI:29035"/>
        <label>2</label>
    </ligand>
</feature>
<feature type="binding site" evidence="1">
    <location>
        <position position="707"/>
    </location>
    <ligand>
        <name>ATP</name>
        <dbReference type="ChEBI" id="CHEBI:30616"/>
        <label>2</label>
    </ligand>
</feature>
<feature type="binding site" evidence="1">
    <location>
        <position position="746"/>
    </location>
    <ligand>
        <name>ATP</name>
        <dbReference type="ChEBI" id="CHEBI:30616"/>
        <label>2</label>
    </ligand>
</feature>
<feature type="binding site" evidence="1">
    <location>
        <position position="748"/>
    </location>
    <ligand>
        <name>ATP</name>
        <dbReference type="ChEBI" id="CHEBI:30616"/>
        <label>2</label>
    </ligand>
</feature>
<feature type="binding site" evidence="1">
    <location>
        <position position="752"/>
    </location>
    <ligand>
        <name>ATP</name>
        <dbReference type="ChEBI" id="CHEBI:30616"/>
        <label>2</label>
    </ligand>
</feature>
<feature type="binding site" evidence="1">
    <location>
        <position position="777"/>
    </location>
    <ligand>
        <name>ATP</name>
        <dbReference type="ChEBI" id="CHEBI:30616"/>
        <label>2</label>
    </ligand>
</feature>
<feature type="binding site" evidence="1">
    <location>
        <position position="778"/>
    </location>
    <ligand>
        <name>ATP</name>
        <dbReference type="ChEBI" id="CHEBI:30616"/>
        <label>2</label>
    </ligand>
</feature>
<feature type="binding site" evidence="1">
    <location>
        <position position="779"/>
    </location>
    <ligand>
        <name>ATP</name>
        <dbReference type="ChEBI" id="CHEBI:30616"/>
        <label>2</label>
    </ligand>
</feature>
<feature type="binding site" evidence="1">
    <location>
        <position position="780"/>
    </location>
    <ligand>
        <name>ATP</name>
        <dbReference type="ChEBI" id="CHEBI:30616"/>
        <label>2</label>
    </ligand>
</feature>
<feature type="binding site" evidence="1">
    <location>
        <position position="820"/>
    </location>
    <ligand>
        <name>ATP</name>
        <dbReference type="ChEBI" id="CHEBI:30616"/>
        <label>2</label>
    </ligand>
</feature>
<feature type="binding site" evidence="1">
    <location>
        <position position="820"/>
    </location>
    <ligand>
        <name>Mg(2+)</name>
        <dbReference type="ChEBI" id="CHEBI:18420"/>
        <label>3</label>
    </ligand>
</feature>
<feature type="binding site" evidence="1">
    <location>
        <position position="820"/>
    </location>
    <ligand>
        <name>Mn(2+)</name>
        <dbReference type="ChEBI" id="CHEBI:29035"/>
        <label>3</label>
    </ligand>
</feature>
<feature type="binding site" evidence="1">
    <location>
        <position position="832"/>
    </location>
    <ligand>
        <name>ATP</name>
        <dbReference type="ChEBI" id="CHEBI:30616"/>
        <label>2</label>
    </ligand>
</feature>
<feature type="binding site" evidence="1">
    <location>
        <position position="832"/>
    </location>
    <ligand>
        <name>Mg(2+)</name>
        <dbReference type="ChEBI" id="CHEBI:18420"/>
        <label>3</label>
    </ligand>
</feature>
<feature type="binding site" evidence="1">
    <location>
        <position position="832"/>
    </location>
    <ligand>
        <name>Mg(2+)</name>
        <dbReference type="ChEBI" id="CHEBI:18420"/>
        <label>4</label>
    </ligand>
</feature>
<feature type="binding site" evidence="1">
    <location>
        <position position="832"/>
    </location>
    <ligand>
        <name>Mn(2+)</name>
        <dbReference type="ChEBI" id="CHEBI:29035"/>
        <label>3</label>
    </ligand>
</feature>
<feature type="binding site" evidence="1">
    <location>
        <position position="832"/>
    </location>
    <ligand>
        <name>Mn(2+)</name>
        <dbReference type="ChEBI" id="CHEBI:29035"/>
        <label>4</label>
    </ligand>
</feature>
<feature type="binding site" evidence="1">
    <location>
        <position position="834"/>
    </location>
    <ligand>
        <name>Mg(2+)</name>
        <dbReference type="ChEBI" id="CHEBI:18420"/>
        <label>4</label>
    </ligand>
</feature>
<feature type="binding site" evidence="1">
    <location>
        <position position="834"/>
    </location>
    <ligand>
        <name>Mn(2+)</name>
        <dbReference type="ChEBI" id="CHEBI:29035"/>
        <label>4</label>
    </ligand>
</feature>
<protein>
    <recommendedName>
        <fullName evidence="1">Carbamoyl phosphate synthase large chain</fullName>
        <ecNumber evidence="1">6.3.4.16</ecNumber>
        <ecNumber evidence="1">6.3.5.5</ecNumber>
    </recommendedName>
    <alternativeName>
        <fullName evidence="1">Carbamoyl phosphate synthetase ammonia chain</fullName>
    </alternativeName>
</protein>
<organism>
    <name type="scientific">Pediococcus pentosaceus (strain ATCC 25745 / CCUG 21536 / LMG 10740 / 183-1w)</name>
    <dbReference type="NCBI Taxonomy" id="278197"/>
    <lineage>
        <taxon>Bacteria</taxon>
        <taxon>Bacillati</taxon>
        <taxon>Bacillota</taxon>
        <taxon>Bacilli</taxon>
        <taxon>Lactobacillales</taxon>
        <taxon>Lactobacillaceae</taxon>
        <taxon>Pediococcus</taxon>
    </lineage>
</organism>
<reference key="1">
    <citation type="journal article" date="2006" name="Proc. Natl. Acad. Sci. U.S.A.">
        <title>Comparative genomics of the lactic acid bacteria.</title>
        <authorList>
            <person name="Makarova K.S."/>
            <person name="Slesarev A."/>
            <person name="Wolf Y.I."/>
            <person name="Sorokin A."/>
            <person name="Mirkin B."/>
            <person name="Koonin E.V."/>
            <person name="Pavlov A."/>
            <person name="Pavlova N."/>
            <person name="Karamychev V."/>
            <person name="Polouchine N."/>
            <person name="Shakhova V."/>
            <person name="Grigoriev I."/>
            <person name="Lou Y."/>
            <person name="Rohksar D."/>
            <person name="Lucas S."/>
            <person name="Huang K."/>
            <person name="Goodstein D.M."/>
            <person name="Hawkins T."/>
            <person name="Plengvidhya V."/>
            <person name="Welker D."/>
            <person name="Hughes J."/>
            <person name="Goh Y."/>
            <person name="Benson A."/>
            <person name="Baldwin K."/>
            <person name="Lee J.-H."/>
            <person name="Diaz-Muniz I."/>
            <person name="Dosti B."/>
            <person name="Smeianov V."/>
            <person name="Wechter W."/>
            <person name="Barabote R."/>
            <person name="Lorca G."/>
            <person name="Altermann E."/>
            <person name="Barrangou R."/>
            <person name="Ganesan B."/>
            <person name="Xie Y."/>
            <person name="Rawsthorne H."/>
            <person name="Tamir D."/>
            <person name="Parker C."/>
            <person name="Breidt F."/>
            <person name="Broadbent J.R."/>
            <person name="Hutkins R."/>
            <person name="O'Sullivan D."/>
            <person name="Steele J."/>
            <person name="Unlu G."/>
            <person name="Saier M.H. Jr."/>
            <person name="Klaenhammer T."/>
            <person name="Richardson P."/>
            <person name="Kozyavkin S."/>
            <person name="Weimer B.C."/>
            <person name="Mills D.A."/>
        </authorList>
    </citation>
    <scope>NUCLEOTIDE SEQUENCE [LARGE SCALE GENOMIC DNA]</scope>
    <source>
        <strain>ATCC 25745 / CCUG 21536 / LMG 10740 / 183-1w</strain>
    </source>
</reference>
<keyword id="KW-0028">Amino-acid biosynthesis</keyword>
<keyword id="KW-0055">Arginine biosynthesis</keyword>
<keyword id="KW-0067">ATP-binding</keyword>
<keyword id="KW-0436">Ligase</keyword>
<keyword id="KW-0460">Magnesium</keyword>
<keyword id="KW-0464">Manganese</keyword>
<keyword id="KW-0479">Metal-binding</keyword>
<keyword id="KW-0547">Nucleotide-binding</keyword>
<keyword id="KW-0665">Pyrimidine biosynthesis</keyword>
<keyword id="KW-0677">Repeat</keyword>
<evidence type="ECO:0000255" key="1">
    <source>
        <dbReference type="HAMAP-Rule" id="MF_01210"/>
    </source>
</evidence>
<name>CARB_PEDPA</name>
<proteinExistence type="inferred from homology"/>
<gene>
    <name evidence="1" type="primary">carB</name>
    <name type="ordered locus">PEPE_0316</name>
</gene>
<dbReference type="EC" id="6.3.4.16" evidence="1"/>
<dbReference type="EC" id="6.3.5.5" evidence="1"/>
<dbReference type="EMBL" id="CP000422">
    <property type="protein sequence ID" value="ABJ67412.1"/>
    <property type="molecule type" value="Genomic_DNA"/>
</dbReference>
<dbReference type="RefSeq" id="WP_011673002.1">
    <property type="nucleotide sequence ID" value="NC_008525.1"/>
</dbReference>
<dbReference type="SMR" id="Q03HB0"/>
<dbReference type="STRING" id="278197.PEPE_0316"/>
<dbReference type="GeneID" id="33062695"/>
<dbReference type="KEGG" id="ppe:PEPE_0316"/>
<dbReference type="eggNOG" id="COG0458">
    <property type="taxonomic scope" value="Bacteria"/>
</dbReference>
<dbReference type="HOGENOM" id="CLU_000513_1_0_9"/>
<dbReference type="OrthoDB" id="9804197at2"/>
<dbReference type="UniPathway" id="UPA00068">
    <property type="reaction ID" value="UER00171"/>
</dbReference>
<dbReference type="UniPathway" id="UPA00070">
    <property type="reaction ID" value="UER00115"/>
</dbReference>
<dbReference type="Proteomes" id="UP000000773">
    <property type="component" value="Chromosome"/>
</dbReference>
<dbReference type="GO" id="GO:0005737">
    <property type="term" value="C:cytoplasm"/>
    <property type="evidence" value="ECO:0007669"/>
    <property type="project" value="TreeGrafter"/>
</dbReference>
<dbReference type="GO" id="GO:0005524">
    <property type="term" value="F:ATP binding"/>
    <property type="evidence" value="ECO:0007669"/>
    <property type="project" value="UniProtKB-UniRule"/>
</dbReference>
<dbReference type="GO" id="GO:0004087">
    <property type="term" value="F:carbamoyl-phosphate synthase (ammonia) activity"/>
    <property type="evidence" value="ECO:0007669"/>
    <property type="project" value="RHEA"/>
</dbReference>
<dbReference type="GO" id="GO:0004088">
    <property type="term" value="F:carbamoyl-phosphate synthase (glutamine-hydrolyzing) activity"/>
    <property type="evidence" value="ECO:0007669"/>
    <property type="project" value="UniProtKB-UniRule"/>
</dbReference>
<dbReference type="GO" id="GO:0046872">
    <property type="term" value="F:metal ion binding"/>
    <property type="evidence" value="ECO:0007669"/>
    <property type="project" value="UniProtKB-KW"/>
</dbReference>
<dbReference type="GO" id="GO:0044205">
    <property type="term" value="P:'de novo' UMP biosynthetic process"/>
    <property type="evidence" value="ECO:0007669"/>
    <property type="project" value="UniProtKB-UniRule"/>
</dbReference>
<dbReference type="GO" id="GO:0006541">
    <property type="term" value="P:glutamine metabolic process"/>
    <property type="evidence" value="ECO:0007669"/>
    <property type="project" value="TreeGrafter"/>
</dbReference>
<dbReference type="GO" id="GO:0006526">
    <property type="term" value="P:L-arginine biosynthetic process"/>
    <property type="evidence" value="ECO:0007669"/>
    <property type="project" value="UniProtKB-UniRule"/>
</dbReference>
<dbReference type="CDD" id="cd01424">
    <property type="entry name" value="MGS_CPS_II"/>
    <property type="match status" value="1"/>
</dbReference>
<dbReference type="FunFam" id="1.10.1030.10:FF:000002">
    <property type="entry name" value="Carbamoyl-phosphate synthase large chain"/>
    <property type="match status" value="1"/>
</dbReference>
<dbReference type="FunFam" id="3.30.1490.20:FF:000001">
    <property type="entry name" value="Carbamoyl-phosphate synthase large chain"/>
    <property type="match status" value="1"/>
</dbReference>
<dbReference type="FunFam" id="3.30.470.20:FF:000001">
    <property type="entry name" value="Carbamoyl-phosphate synthase large chain"/>
    <property type="match status" value="1"/>
</dbReference>
<dbReference type="FunFam" id="3.30.470.20:FF:000026">
    <property type="entry name" value="Carbamoyl-phosphate synthase large chain"/>
    <property type="match status" value="1"/>
</dbReference>
<dbReference type="FunFam" id="3.40.50.20:FF:000001">
    <property type="entry name" value="Carbamoyl-phosphate synthase large chain"/>
    <property type="match status" value="1"/>
</dbReference>
<dbReference type="FunFam" id="3.40.50.20:FF:000002">
    <property type="entry name" value="Carbamoyl-phosphate synthase large chain"/>
    <property type="match status" value="1"/>
</dbReference>
<dbReference type="Gene3D" id="3.40.50.20">
    <property type="match status" value="2"/>
</dbReference>
<dbReference type="Gene3D" id="3.30.1490.20">
    <property type="entry name" value="ATP-grasp fold, A domain"/>
    <property type="match status" value="1"/>
</dbReference>
<dbReference type="Gene3D" id="3.30.470.20">
    <property type="entry name" value="ATP-grasp fold, B domain"/>
    <property type="match status" value="2"/>
</dbReference>
<dbReference type="Gene3D" id="1.10.1030.10">
    <property type="entry name" value="Carbamoyl-phosphate synthetase, large subunit oligomerisation domain"/>
    <property type="match status" value="1"/>
</dbReference>
<dbReference type="Gene3D" id="3.40.50.1380">
    <property type="entry name" value="Methylglyoxal synthase-like domain"/>
    <property type="match status" value="1"/>
</dbReference>
<dbReference type="HAMAP" id="MF_01210_B">
    <property type="entry name" value="CPSase_L_chain_B"/>
    <property type="match status" value="1"/>
</dbReference>
<dbReference type="InterPro" id="IPR011761">
    <property type="entry name" value="ATP-grasp"/>
</dbReference>
<dbReference type="InterPro" id="IPR013815">
    <property type="entry name" value="ATP_grasp_subdomain_1"/>
</dbReference>
<dbReference type="InterPro" id="IPR006275">
    <property type="entry name" value="CarbamoylP_synth_lsu"/>
</dbReference>
<dbReference type="InterPro" id="IPR005480">
    <property type="entry name" value="CarbamoylP_synth_lsu_oligo"/>
</dbReference>
<dbReference type="InterPro" id="IPR036897">
    <property type="entry name" value="CarbamoylP_synth_lsu_oligo_sf"/>
</dbReference>
<dbReference type="InterPro" id="IPR005479">
    <property type="entry name" value="CbamoylP_synth_lsu-like_ATP-bd"/>
</dbReference>
<dbReference type="InterPro" id="IPR005483">
    <property type="entry name" value="CbamoylP_synth_lsu_CPSase_dom"/>
</dbReference>
<dbReference type="InterPro" id="IPR011607">
    <property type="entry name" value="MGS-like_dom"/>
</dbReference>
<dbReference type="InterPro" id="IPR036914">
    <property type="entry name" value="MGS-like_dom_sf"/>
</dbReference>
<dbReference type="InterPro" id="IPR033937">
    <property type="entry name" value="MGS_CPS_CarB"/>
</dbReference>
<dbReference type="InterPro" id="IPR016185">
    <property type="entry name" value="PreATP-grasp_dom_sf"/>
</dbReference>
<dbReference type="NCBIfam" id="TIGR01369">
    <property type="entry name" value="CPSaseII_lrg"/>
    <property type="match status" value="1"/>
</dbReference>
<dbReference type="NCBIfam" id="NF003671">
    <property type="entry name" value="PRK05294.1"/>
    <property type="match status" value="1"/>
</dbReference>
<dbReference type="NCBIfam" id="NF009455">
    <property type="entry name" value="PRK12815.1"/>
    <property type="match status" value="1"/>
</dbReference>
<dbReference type="PANTHER" id="PTHR11405:SF53">
    <property type="entry name" value="CARBAMOYL-PHOSPHATE SYNTHASE [AMMONIA], MITOCHONDRIAL"/>
    <property type="match status" value="1"/>
</dbReference>
<dbReference type="PANTHER" id="PTHR11405">
    <property type="entry name" value="CARBAMOYLTRANSFERASE FAMILY MEMBER"/>
    <property type="match status" value="1"/>
</dbReference>
<dbReference type="Pfam" id="PF02786">
    <property type="entry name" value="CPSase_L_D2"/>
    <property type="match status" value="2"/>
</dbReference>
<dbReference type="Pfam" id="PF02787">
    <property type="entry name" value="CPSase_L_D3"/>
    <property type="match status" value="1"/>
</dbReference>
<dbReference type="Pfam" id="PF02142">
    <property type="entry name" value="MGS"/>
    <property type="match status" value="1"/>
</dbReference>
<dbReference type="PRINTS" id="PR00098">
    <property type="entry name" value="CPSASE"/>
</dbReference>
<dbReference type="SMART" id="SM01096">
    <property type="entry name" value="CPSase_L_D3"/>
    <property type="match status" value="1"/>
</dbReference>
<dbReference type="SMART" id="SM01209">
    <property type="entry name" value="GARS_A"/>
    <property type="match status" value="1"/>
</dbReference>
<dbReference type="SMART" id="SM00851">
    <property type="entry name" value="MGS"/>
    <property type="match status" value="1"/>
</dbReference>
<dbReference type="SUPFAM" id="SSF48108">
    <property type="entry name" value="Carbamoyl phosphate synthetase, large subunit connection domain"/>
    <property type="match status" value="1"/>
</dbReference>
<dbReference type="SUPFAM" id="SSF56059">
    <property type="entry name" value="Glutathione synthetase ATP-binding domain-like"/>
    <property type="match status" value="2"/>
</dbReference>
<dbReference type="SUPFAM" id="SSF52335">
    <property type="entry name" value="Methylglyoxal synthase-like"/>
    <property type="match status" value="1"/>
</dbReference>
<dbReference type="SUPFAM" id="SSF52440">
    <property type="entry name" value="PreATP-grasp domain"/>
    <property type="match status" value="2"/>
</dbReference>
<dbReference type="PROSITE" id="PS50975">
    <property type="entry name" value="ATP_GRASP"/>
    <property type="match status" value="2"/>
</dbReference>
<dbReference type="PROSITE" id="PS00866">
    <property type="entry name" value="CPSASE_1"/>
    <property type="match status" value="2"/>
</dbReference>
<dbReference type="PROSITE" id="PS00867">
    <property type="entry name" value="CPSASE_2"/>
    <property type="match status" value="2"/>
</dbReference>
<dbReference type="PROSITE" id="PS51855">
    <property type="entry name" value="MGS"/>
    <property type="match status" value="1"/>
</dbReference>
<sequence length="1057" mass="116148">MPKREDINKILVLGSGPIIIGQAAEFDYSGTQACLSLKELGYQTVLINSNPATIMTDTDIADKVYIEPLTLQFVSQILRKELPDAILPTLGGQQGLNMAMELSEAGILDELGIELLGTKLDAIDQAEDRERFRALMNDLNEPVPDSGIATTVEEAVSFADQSGYPVIVRPAFTMGGTGGGIAQDEAELRKITANGLTLSPVTQVLIEQSIAGLKEIEFEVMRDSVDNAIVVCNMENFDPVGIHTGDSIVYAPVQTLTDREVQMLRDASLSIIRALKIEGGCNVQLALDPAQDRYYVIEVNPRVSRSSALASKATGYPIAKVAAKIAVGLTLDEILNPVTGTTLAEFEPALDYVVCKIPRWPFDKFVRADRRLGTQMKATGEVMAVGRNVEEATQKAIRSLDIDINYIGDEELADLNEADLVDGIIHARDDRIFYLYEAIKRGYSVDKLADLTKINVYYLDKLLHIYEIEQELIATPFNADVLELAKKNGFSDEVIGKMWKTNEKEVRAYREQMGLSPVYKMIDTCAGEFESQTPYYYSTYELENESIVSNRKSIVVLGSGPIRIGQGVEFDYATVHSIQAIRQMGYEAIVVNNNPETVSTDFSMSDKLYFEPLTVEDVMNVIDLEKPEGVIVQFGGQTAINLAEPLAERGIKIFGTTVENVNRAEDRDEFNKLIQANGIRQPQGRTATTTSGAIEAAESIGYPVLVRPSYVLGGRAMEIVHAKEELENYMKNAVKVSHNHPVLVDQYLVGKECEVDVISDGENVVIPGIMEHIERSGVHSGDSMTVYPAQTLSQKVQDEIVKVSIKLAQSLECIGLMNIQFVVHNDEAYVIEVNPRASRTVPIMSKVTDLPMARLATRAILGESLVNQGLKPGLHPAGEIIHVKAPVFSFTKLDNVDSLLGPEMKSTGEVMGSDRTMAKALYKAFEGAKMHMPDHGKVLITVKDEDKGEAIDFARRFWELGYQLVATKGTAQTLAAHGLKVETVGKMTEENNIVDRIHDHRIQMVINTISDSTTSAADGIKIRSTALTYGVPLFTALDTVDAILQVLESQAFTTLHL</sequence>
<comment type="function">
    <text evidence="1">Large subunit of the glutamine-dependent carbamoyl phosphate synthetase (CPSase). CPSase catalyzes the formation of carbamoyl phosphate from the ammonia moiety of glutamine, carbonate, and phosphate donated by ATP, constituting the first step of 2 biosynthetic pathways, one leading to arginine and/or urea and the other to pyrimidine nucleotides. The large subunit (synthetase) binds the substrates ammonia (free or transferred from glutamine from the small subunit), hydrogencarbonate and ATP and carries out an ATP-coupled ligase reaction, activating hydrogencarbonate by forming carboxy phosphate which reacts with ammonia to form carbamoyl phosphate.</text>
</comment>
<comment type="catalytic activity">
    <reaction evidence="1">
        <text>hydrogencarbonate + L-glutamine + 2 ATP + H2O = carbamoyl phosphate + L-glutamate + 2 ADP + phosphate + 2 H(+)</text>
        <dbReference type="Rhea" id="RHEA:18633"/>
        <dbReference type="ChEBI" id="CHEBI:15377"/>
        <dbReference type="ChEBI" id="CHEBI:15378"/>
        <dbReference type="ChEBI" id="CHEBI:17544"/>
        <dbReference type="ChEBI" id="CHEBI:29985"/>
        <dbReference type="ChEBI" id="CHEBI:30616"/>
        <dbReference type="ChEBI" id="CHEBI:43474"/>
        <dbReference type="ChEBI" id="CHEBI:58228"/>
        <dbReference type="ChEBI" id="CHEBI:58359"/>
        <dbReference type="ChEBI" id="CHEBI:456216"/>
        <dbReference type="EC" id="6.3.5.5"/>
    </reaction>
</comment>
<comment type="catalytic activity">
    <molecule>Carbamoyl phosphate synthase large chain</molecule>
    <reaction evidence="1">
        <text>hydrogencarbonate + NH4(+) + 2 ATP = carbamoyl phosphate + 2 ADP + phosphate + 2 H(+)</text>
        <dbReference type="Rhea" id="RHEA:18029"/>
        <dbReference type="ChEBI" id="CHEBI:15378"/>
        <dbReference type="ChEBI" id="CHEBI:17544"/>
        <dbReference type="ChEBI" id="CHEBI:28938"/>
        <dbReference type="ChEBI" id="CHEBI:30616"/>
        <dbReference type="ChEBI" id="CHEBI:43474"/>
        <dbReference type="ChEBI" id="CHEBI:58228"/>
        <dbReference type="ChEBI" id="CHEBI:456216"/>
        <dbReference type="EC" id="6.3.4.16"/>
    </reaction>
</comment>
<comment type="cofactor">
    <cofactor evidence="1">
        <name>Mg(2+)</name>
        <dbReference type="ChEBI" id="CHEBI:18420"/>
    </cofactor>
    <cofactor evidence="1">
        <name>Mn(2+)</name>
        <dbReference type="ChEBI" id="CHEBI:29035"/>
    </cofactor>
    <text evidence="1">Binds 4 Mg(2+) or Mn(2+) ions per subunit.</text>
</comment>
<comment type="pathway">
    <text evidence="1">Amino-acid biosynthesis; L-arginine biosynthesis; carbamoyl phosphate from bicarbonate: step 1/1.</text>
</comment>
<comment type="pathway">
    <text evidence="1">Pyrimidine metabolism; UMP biosynthesis via de novo pathway; (S)-dihydroorotate from bicarbonate: step 1/3.</text>
</comment>
<comment type="subunit">
    <text evidence="1">Composed of two chains; the small (or glutamine) chain promotes the hydrolysis of glutamine to ammonia, which is used by the large (or ammonia) chain to synthesize carbamoyl phosphate. Tetramer of heterodimers (alpha,beta)4.</text>
</comment>
<comment type="domain">
    <text evidence="1">The large subunit is composed of 2 ATP-grasp domains that are involved in binding the 2 ATP molecules needed for carbamoyl phosphate synthesis. The N-terminal ATP-grasp domain (referred to as the carboxyphosphate synthetic component) catalyzes the ATP-dependent phosphorylation of hydrogencarbonate to carboxyphosphate and the subsequent nucleophilic attack by ammonia to form a carbamate intermediate. The C-terminal ATP-grasp domain (referred to as the carbamoyl phosphate synthetic component) then catalyzes the phosphorylation of carbamate with the second ATP to form the end product carbamoyl phosphate. The reactive and unstable enzyme intermediates are sequentially channeled from one active site to the next through the interior of the protein over a distance of at least 96 A.</text>
</comment>
<comment type="similarity">
    <text evidence="1">Belongs to the CarB family.</text>
</comment>
<accession>Q03HB0</accession>